<comment type="function">
    <text evidence="1">Component of the cytosolic Fe/S protein assembly machinery. Required for maturation of extramitochondrial Fe/S proteins. May play a role in the transfer of pre-assembled Fe/S clusters to target apoproteins (By similarity).</text>
</comment>
<comment type="similarity">
    <text evidence="4">Belongs to the NARF family.</text>
</comment>
<feature type="chain" id="PRO_0000383721" description="Cytosolic Fe-S cluster assembly factor NAR1">
    <location>
        <begin position="1"/>
        <end position="607"/>
    </location>
</feature>
<feature type="region of interest" description="Disordered" evidence="3">
    <location>
        <begin position="430"/>
        <end position="476"/>
    </location>
</feature>
<feature type="compositionally biased region" description="Low complexity" evidence="3">
    <location>
        <begin position="432"/>
        <end position="447"/>
    </location>
</feature>
<feature type="binding site" evidence="2">
    <location>
        <position position="20"/>
    </location>
    <ligand>
        <name>[4Fe-4S] cluster</name>
        <dbReference type="ChEBI" id="CHEBI:49883"/>
        <label>1</label>
    </ligand>
</feature>
<feature type="binding site" evidence="2">
    <location>
        <position position="82"/>
    </location>
    <ligand>
        <name>[4Fe-4S] cluster</name>
        <dbReference type="ChEBI" id="CHEBI:49883"/>
        <label>1</label>
    </ligand>
</feature>
<feature type="binding site" evidence="2">
    <location>
        <position position="85"/>
    </location>
    <ligand>
        <name>[4Fe-4S] cluster</name>
        <dbReference type="ChEBI" id="CHEBI:49883"/>
        <label>1</label>
    </ligand>
</feature>
<feature type="binding site" evidence="2">
    <location>
        <position position="88"/>
    </location>
    <ligand>
        <name>[4Fe-4S] cluster</name>
        <dbReference type="ChEBI" id="CHEBI:49883"/>
        <label>1</label>
    </ligand>
</feature>
<feature type="binding site" evidence="2">
    <location>
        <position position="204"/>
    </location>
    <ligand>
        <name>[4Fe-4S] cluster</name>
        <dbReference type="ChEBI" id="CHEBI:49883"/>
        <label>2</label>
    </ligand>
</feature>
<feature type="binding site" evidence="2">
    <location>
        <position position="259"/>
    </location>
    <ligand>
        <name>[4Fe-4S] cluster</name>
        <dbReference type="ChEBI" id="CHEBI:49883"/>
        <label>2</label>
    </ligand>
</feature>
<feature type="binding site" evidence="2">
    <location>
        <position position="496"/>
    </location>
    <ligand>
        <name>[4Fe-4S] cluster</name>
        <dbReference type="ChEBI" id="CHEBI:49883"/>
        <label>2</label>
    </ligand>
</feature>
<feature type="binding site" evidence="2">
    <location>
        <position position="500"/>
    </location>
    <ligand>
        <name>[4Fe-4S] cluster</name>
        <dbReference type="ChEBI" id="CHEBI:49883"/>
        <label>2</label>
    </ligand>
</feature>
<accession>Q5APK7</accession>
<accession>A0A1D8PEJ3</accession>
<name>NAR1_CANAL</name>
<keyword id="KW-0004">4Fe-4S</keyword>
<keyword id="KW-0408">Iron</keyword>
<keyword id="KW-0411">Iron-sulfur</keyword>
<keyword id="KW-0479">Metal-binding</keyword>
<keyword id="KW-1185">Reference proteome</keyword>
<sequence length="607" mass="67085">MSALLSADDLNDFISPGVACIKPLASSSTNTTTTNTTDSYNENGEVEIQIDSQGNPLEISKIDDKQFQTNKLTPAQISLADCLACSGCITSAEEVLVAQHSHQELIKALQSQKETNKVFVVSISHQSRASLAMAYNVSIENMDKCLIDLFIRQMGFTYIVGTSLGRKLSLINEAKEIINRKTKGSGTGGIDSDSSSGPILSSICPGWVLYAEKTHPYIIPKMSTVKSPQQITGCLLKNLTSNSLNIEKSKIYHLSIMPCFDKKLESARPEVYEEEEEEEEEKDKALVSVPDVDCVITAKELITLLEECPQYQLIPPTLPQEELIGGGCLSMTEIYKQYAPPNWPFIEISWSNDSGSASGGYAYNYLTIYRNDLILKGYDGNKFTINLINGRNPDIYEMRLMYNGENKEKLASAAVVNGFRNIQNLVRKLKPNTGKSTNTTTTTTKSKVNPLAARRRARIANNRGKPETKSTSEVNSQEMEIVADASKVDYVEIMACPNGCINGGGQISAPNTTTTSITLPQKEIEKQWINAVLEKYNSIPMFDLSSQSSSSSSPNEIIKFIEWSKKFENQFNISDNRLFKTHFNPVEKNIIMSVDDPATALLVGSKW</sequence>
<reference key="1">
    <citation type="journal article" date="2004" name="Proc. Natl. Acad. Sci. U.S.A.">
        <title>The diploid genome sequence of Candida albicans.</title>
        <authorList>
            <person name="Jones T."/>
            <person name="Federspiel N.A."/>
            <person name="Chibana H."/>
            <person name="Dungan J."/>
            <person name="Kalman S."/>
            <person name="Magee B.B."/>
            <person name="Newport G."/>
            <person name="Thorstenson Y.R."/>
            <person name="Agabian N."/>
            <person name="Magee P.T."/>
            <person name="Davis R.W."/>
            <person name="Scherer S."/>
        </authorList>
    </citation>
    <scope>NUCLEOTIDE SEQUENCE [LARGE SCALE GENOMIC DNA]</scope>
    <source>
        <strain>SC5314 / ATCC MYA-2876</strain>
    </source>
</reference>
<reference key="2">
    <citation type="journal article" date="2007" name="Genome Biol.">
        <title>Assembly of the Candida albicans genome into sixteen supercontigs aligned on the eight chromosomes.</title>
        <authorList>
            <person name="van het Hoog M."/>
            <person name="Rast T.J."/>
            <person name="Martchenko M."/>
            <person name="Grindle S."/>
            <person name="Dignard D."/>
            <person name="Hogues H."/>
            <person name="Cuomo C."/>
            <person name="Berriman M."/>
            <person name="Scherer S."/>
            <person name="Magee B.B."/>
            <person name="Whiteway M."/>
            <person name="Chibana H."/>
            <person name="Nantel A."/>
            <person name="Magee P.T."/>
        </authorList>
    </citation>
    <scope>GENOME REANNOTATION</scope>
    <source>
        <strain>SC5314 / ATCC MYA-2876</strain>
    </source>
</reference>
<reference key="3">
    <citation type="journal article" date="2013" name="Genome Biol.">
        <title>Assembly of a phased diploid Candida albicans genome facilitates allele-specific measurements and provides a simple model for repeat and indel structure.</title>
        <authorList>
            <person name="Muzzey D."/>
            <person name="Schwartz K."/>
            <person name="Weissman J.S."/>
            <person name="Sherlock G."/>
        </authorList>
    </citation>
    <scope>NUCLEOTIDE SEQUENCE [LARGE SCALE GENOMIC DNA]</scope>
    <scope>GENOME REANNOTATION</scope>
    <source>
        <strain>SC5314 / ATCC MYA-2876</strain>
    </source>
</reference>
<protein>
    <recommendedName>
        <fullName>Cytosolic Fe-S cluster assembly factor NAR1</fullName>
    </recommendedName>
    <alternativeName>
        <fullName>Nuclear architecture-related protein 1</fullName>
    </alternativeName>
</protein>
<organism>
    <name type="scientific">Candida albicans (strain SC5314 / ATCC MYA-2876)</name>
    <name type="common">Yeast</name>
    <dbReference type="NCBI Taxonomy" id="237561"/>
    <lineage>
        <taxon>Eukaryota</taxon>
        <taxon>Fungi</taxon>
        <taxon>Dikarya</taxon>
        <taxon>Ascomycota</taxon>
        <taxon>Saccharomycotina</taxon>
        <taxon>Pichiomycetes</taxon>
        <taxon>Debaryomycetaceae</taxon>
        <taxon>Candida/Lodderomyces clade</taxon>
        <taxon>Candida</taxon>
    </lineage>
</organism>
<gene>
    <name type="primary">NAR1</name>
    <name type="ordered locus">CAALFM_C109010WA</name>
    <name type="ORF">CaO19.12221</name>
    <name type="ORF">CaO19.4757</name>
</gene>
<evidence type="ECO:0000250" key="1"/>
<evidence type="ECO:0000255" key="2"/>
<evidence type="ECO:0000256" key="3">
    <source>
        <dbReference type="SAM" id="MobiDB-lite"/>
    </source>
</evidence>
<evidence type="ECO:0000305" key="4"/>
<proteinExistence type="inferred from homology"/>
<dbReference type="EMBL" id="CP017623">
    <property type="protein sequence ID" value="AOW26536.1"/>
    <property type="molecule type" value="Genomic_DNA"/>
</dbReference>
<dbReference type="RefSeq" id="XP_723443.2">
    <property type="nucleotide sequence ID" value="XM_718350.2"/>
</dbReference>
<dbReference type="SMR" id="Q5APK7"/>
<dbReference type="FunCoup" id="Q5APK7">
    <property type="interactions" value="392"/>
</dbReference>
<dbReference type="STRING" id="237561.Q5APK7"/>
<dbReference type="PeptideAtlas" id="Q5APK7"/>
<dbReference type="EnsemblFungi" id="C1_09010W_A-T">
    <property type="protein sequence ID" value="C1_09010W_A-T-p1"/>
    <property type="gene ID" value="C1_09010W_A"/>
</dbReference>
<dbReference type="GeneID" id="3634916"/>
<dbReference type="KEGG" id="cal:CAALFM_C109010WA"/>
<dbReference type="CGD" id="CAL0000185143">
    <property type="gene designation" value="NAR1"/>
</dbReference>
<dbReference type="VEuPathDB" id="FungiDB:C1_09010W_A"/>
<dbReference type="eggNOG" id="KOG2439">
    <property type="taxonomic scope" value="Eukaryota"/>
</dbReference>
<dbReference type="HOGENOM" id="CLU_018240_0_1_1"/>
<dbReference type="InParanoid" id="Q5APK7"/>
<dbReference type="OrthoDB" id="10253113at2759"/>
<dbReference type="PRO" id="PR:Q5APK7"/>
<dbReference type="Proteomes" id="UP000000559">
    <property type="component" value="Chromosome 1"/>
</dbReference>
<dbReference type="GO" id="GO:0097361">
    <property type="term" value="C:cytosolic [4Fe-4S] assembly targeting complex"/>
    <property type="evidence" value="ECO:0000318"/>
    <property type="project" value="GO_Central"/>
</dbReference>
<dbReference type="GO" id="GO:0051539">
    <property type="term" value="F:4 iron, 4 sulfur cluster binding"/>
    <property type="evidence" value="ECO:0007669"/>
    <property type="project" value="UniProtKB-KW"/>
</dbReference>
<dbReference type="GO" id="GO:0051536">
    <property type="term" value="F:iron-sulfur cluster binding"/>
    <property type="evidence" value="ECO:0000250"/>
    <property type="project" value="UniProtKB"/>
</dbReference>
<dbReference type="GO" id="GO:0046872">
    <property type="term" value="F:metal ion binding"/>
    <property type="evidence" value="ECO:0007669"/>
    <property type="project" value="UniProtKB-KW"/>
</dbReference>
<dbReference type="GO" id="GO:0016226">
    <property type="term" value="P:iron-sulfur cluster assembly"/>
    <property type="evidence" value="ECO:0000250"/>
    <property type="project" value="UniProtKB"/>
</dbReference>
<dbReference type="Gene3D" id="3.30.70.20">
    <property type="match status" value="1"/>
</dbReference>
<dbReference type="Gene3D" id="3.40.50.1780">
    <property type="match status" value="1"/>
</dbReference>
<dbReference type="Gene3D" id="3.40.950.10">
    <property type="entry name" value="Fe-only Hydrogenase (Larger Subunit), Chain L, domain 3"/>
    <property type="match status" value="1"/>
</dbReference>
<dbReference type="InterPro" id="IPR050340">
    <property type="entry name" value="Cytosolic_Fe-S_CAF"/>
</dbReference>
<dbReference type="InterPro" id="IPR009016">
    <property type="entry name" value="Fe_hydrogenase"/>
</dbReference>
<dbReference type="InterPro" id="IPR004108">
    <property type="entry name" value="Fe_hydrogenase_lsu_C"/>
</dbReference>
<dbReference type="PANTHER" id="PTHR11615">
    <property type="entry name" value="NITRATE, FORMATE, IRON DEHYDROGENASE"/>
    <property type="match status" value="1"/>
</dbReference>
<dbReference type="Pfam" id="PF02906">
    <property type="entry name" value="Fe_hyd_lg_C"/>
    <property type="match status" value="1"/>
</dbReference>
<dbReference type="SUPFAM" id="SSF53920">
    <property type="entry name" value="Fe-only hydrogenase"/>
    <property type="match status" value="1"/>
</dbReference>